<comment type="function">
    <text evidence="4 5">Active transposase that specifically recognizes the bipartite 5'-TXXGGGX(A/T)-3' consensus motif and mediates transposition.</text>
</comment>
<comment type="interaction">
    <interactant intactId="EBI-10982953">
        <id>Q9H5L6</id>
    </interactant>
    <interactant intactId="EBI-25492388">
        <id>PRO_0000449621</id>
        <label>rep</label>
        <dbReference type="UniProtKB" id="P0DTD1"/>
    </interactant>
    <organismsDiffer>true</organismsDiffer>
    <experiments>3</experiments>
</comment>
<comment type="interaction">
    <interactant intactId="EBI-10982953">
        <id>Q9H5L6</id>
    </interactant>
    <interactant intactId="EBI-25492395">
        <id>PRO_0000449633</id>
        <label>rep</label>
        <dbReference type="UniProtKB" id="P0DTD1"/>
    </interactant>
    <organismsDiffer>true</organismsDiffer>
    <experiments>3</experiments>
</comment>
<comment type="miscellaneous">
    <text evidence="7">Able to mediate mobilization of P-elements when transfected in Drosophila.</text>
</comment>
<feature type="chain" id="PRO_0000317246" description="DNA transposase THAP9">
    <location>
        <begin position="1"/>
        <end position="903"/>
    </location>
</feature>
<feature type="zinc finger region" description="THAP-type" evidence="2">
    <location>
        <begin position="1"/>
        <end position="89"/>
    </location>
</feature>
<feature type="short sequence motif" description="HCFC1-binding motif (HBM)" evidence="1">
    <location>
        <begin position="123"/>
        <end position="126"/>
    </location>
</feature>
<feature type="sequence variant" id="VAR_038486" description="In dbSNP:rs1031639." evidence="3">
    <original>M</original>
    <variation>I</variation>
    <location>
        <position position="284"/>
    </location>
</feature>
<feature type="sequence variant" id="VAR_038487" description="In dbSNP:rs897945." evidence="3">
    <original>L</original>
    <variation>F</variation>
    <location>
        <position position="299"/>
    </location>
</feature>
<feature type="sequence variant" id="VAR_038488" description="In dbSNP:rs6535411." evidence="3">
    <original>N</original>
    <variation>D</variation>
    <location>
        <position position="812"/>
    </location>
</feature>
<feature type="sequence variant" id="VAR_061842" description="In dbSNP:rs35532215.">
    <original>V</original>
    <variation>I</variation>
    <location>
        <position position="833"/>
    </location>
</feature>
<feature type="sequence conflict" description="In Ref. 1; BAB15609." evidence="6" ref="1">
    <original>L</original>
    <variation>I</variation>
    <location>
        <position position="174"/>
    </location>
</feature>
<feature type="sequence conflict" description="In Ref. 1; BAB15609." evidence="6" ref="1">
    <original>E</original>
    <variation>G</variation>
    <location>
        <position position="491"/>
    </location>
</feature>
<feature type="sequence conflict" description="In Ref. 1; BAG52354." evidence="6" ref="1">
    <original>S</original>
    <variation>P</variation>
    <location>
        <position position="875"/>
    </location>
</feature>
<protein>
    <recommendedName>
        <fullName>DNA transposase THAP9</fullName>
        <ecNumber>2.7.7.-</ecNumber>
    </recommendedName>
    <alternativeName>
        <fullName>THAP domain-containing protein 9</fullName>
        <shortName>hTh9</shortName>
    </alternativeName>
</protein>
<sequence>MTRSCSAVGCSTRDTVLSRERGLSFHQFPTDTIQRSKWIRAVNRVDPRSKKIWIPGPGAILCSKHFQESDFESYGIRRKLKKGAVPSVSLYKIPQGVHLKGKARQKILKQPLPDNSQEVATEDHNYSLKTPLTIGAEKLAEVQQMLQVSKKRLISVKNYRMIKKRKGLRLIDALVEEKLLSEETECLLRAQFSDFKWELYNWRETDEYSAEMKQFACTLYLCSSKVYDYVRKILKLPHSSILRTWLSKCQPSPGFNSNIFSFLQRRVENGDQLYQYCSLLIKSMPLKQQLQWDPSSHSLQGFMDFGLGKLDADETPLASETVLLMAVGIFGHWRTPLGYFFVNRASGYLQAQLLRLTIGKLSDIGITVLAVTSDATAHSVQMAKALGIHIDGDDMKCTFQHPSSSSQQIAYFFDSCHLLRLIRNAFQNFQSIQFINGIAHWQHLVELVALEEQELSNMERIPSTLANLKNHVLKVNSATQLFSESVASALEYLLSLDLPPFQNCIGTIHFLRLINNLFDIFNSRNCYGKGLKGPLLPETYSKINHVLIEAKTIFVTLSDTSNNQIIKGKQKLGFLGFLLNAESLKWLYQNYVFPKVMPFPYLLTYKFSHDHLELFLKMLRQVLVTSSSPTCMAFQKAYYNLETRYKFQDEVFLSKVSIFDISIARRKDLALWTVQRQYGVSVTKTVFHEEGICQDWSHCSLSEALLDLSDHRRNLICYAGYVANKLSALLTCEDCITALYASDLKASKIGSLLFVKKKNGLHFPSESLCRVINICERVVRTHSRMAIFELVSKQRELYLQQKILCELSGHINLFVDVNKHLFDGEVCAINHFVKLLKDIIICFLNIRAKNVAQNPLKHHSERTDMKTLSRKHWSSVQDYKCSSFANTSSKFRHLLSNDGYPFK</sequence>
<name>THAP9_HUMAN</name>
<keyword id="KW-0229">DNA integration</keyword>
<keyword id="KW-0233">DNA recombination</keyword>
<keyword id="KW-0238">DNA-binding</keyword>
<keyword id="KW-0479">Metal-binding</keyword>
<keyword id="KW-1267">Proteomics identification</keyword>
<keyword id="KW-1185">Reference proteome</keyword>
<keyword id="KW-0808">Transferase</keyword>
<keyword id="KW-0862">Zinc</keyword>
<keyword id="KW-0863">Zinc-finger</keyword>
<gene>
    <name type="primary">THAP9</name>
</gene>
<accession>Q9H5L6</accession>
<accession>B3KRE2</accession>
<accession>Q59AC9</accession>
<evidence type="ECO:0000250" key="1"/>
<evidence type="ECO:0000255" key="2">
    <source>
        <dbReference type="PROSITE-ProRule" id="PRU00309"/>
    </source>
</evidence>
<evidence type="ECO:0000269" key="3">
    <source>
    </source>
</evidence>
<evidence type="ECO:0000269" key="4">
    <source>
    </source>
</evidence>
<evidence type="ECO:0000269" key="5">
    <source>
    </source>
</evidence>
<evidence type="ECO:0000305" key="6"/>
<evidence type="ECO:0000305" key="7">
    <source>
    </source>
</evidence>
<reference key="1">
    <citation type="journal article" date="2004" name="Nat. Genet.">
        <title>Complete sequencing and characterization of 21,243 full-length human cDNAs.</title>
        <authorList>
            <person name="Ota T."/>
            <person name="Suzuki Y."/>
            <person name="Nishikawa T."/>
            <person name="Otsuki T."/>
            <person name="Sugiyama T."/>
            <person name="Irie R."/>
            <person name="Wakamatsu A."/>
            <person name="Hayashi K."/>
            <person name="Sato H."/>
            <person name="Nagai K."/>
            <person name="Kimura K."/>
            <person name="Makita H."/>
            <person name="Sekine M."/>
            <person name="Obayashi M."/>
            <person name="Nishi T."/>
            <person name="Shibahara T."/>
            <person name="Tanaka T."/>
            <person name="Ishii S."/>
            <person name="Yamamoto J."/>
            <person name="Saito K."/>
            <person name="Kawai Y."/>
            <person name="Isono Y."/>
            <person name="Nakamura Y."/>
            <person name="Nagahari K."/>
            <person name="Murakami K."/>
            <person name="Yasuda T."/>
            <person name="Iwayanagi T."/>
            <person name="Wagatsuma M."/>
            <person name="Shiratori A."/>
            <person name="Sudo H."/>
            <person name="Hosoiri T."/>
            <person name="Kaku Y."/>
            <person name="Kodaira H."/>
            <person name="Kondo H."/>
            <person name="Sugawara M."/>
            <person name="Takahashi M."/>
            <person name="Kanda K."/>
            <person name="Yokoi T."/>
            <person name="Furuya T."/>
            <person name="Kikkawa E."/>
            <person name="Omura Y."/>
            <person name="Abe K."/>
            <person name="Kamihara K."/>
            <person name="Katsuta N."/>
            <person name="Sato K."/>
            <person name="Tanikawa M."/>
            <person name="Yamazaki M."/>
            <person name="Ninomiya K."/>
            <person name="Ishibashi T."/>
            <person name="Yamashita H."/>
            <person name="Murakawa K."/>
            <person name="Fujimori K."/>
            <person name="Tanai H."/>
            <person name="Kimata M."/>
            <person name="Watanabe M."/>
            <person name="Hiraoka S."/>
            <person name="Chiba Y."/>
            <person name="Ishida S."/>
            <person name="Ono Y."/>
            <person name="Takiguchi S."/>
            <person name="Watanabe S."/>
            <person name="Yosida M."/>
            <person name="Hotuta T."/>
            <person name="Kusano J."/>
            <person name="Kanehori K."/>
            <person name="Takahashi-Fujii A."/>
            <person name="Hara H."/>
            <person name="Tanase T.-O."/>
            <person name="Nomura Y."/>
            <person name="Togiya S."/>
            <person name="Komai F."/>
            <person name="Hara R."/>
            <person name="Takeuchi K."/>
            <person name="Arita M."/>
            <person name="Imose N."/>
            <person name="Musashino K."/>
            <person name="Yuuki H."/>
            <person name="Oshima A."/>
            <person name="Sasaki N."/>
            <person name="Aotsuka S."/>
            <person name="Yoshikawa Y."/>
            <person name="Matsunawa H."/>
            <person name="Ichihara T."/>
            <person name="Shiohata N."/>
            <person name="Sano S."/>
            <person name="Moriya S."/>
            <person name="Momiyama H."/>
            <person name="Satoh N."/>
            <person name="Takami S."/>
            <person name="Terashima Y."/>
            <person name="Suzuki O."/>
            <person name="Nakagawa S."/>
            <person name="Senoh A."/>
            <person name="Mizoguchi H."/>
            <person name="Goto Y."/>
            <person name="Shimizu F."/>
            <person name="Wakebe H."/>
            <person name="Hishigaki H."/>
            <person name="Watanabe T."/>
            <person name="Sugiyama A."/>
            <person name="Takemoto M."/>
            <person name="Kawakami B."/>
            <person name="Yamazaki M."/>
            <person name="Watanabe K."/>
            <person name="Kumagai A."/>
            <person name="Itakura S."/>
            <person name="Fukuzumi Y."/>
            <person name="Fujimori Y."/>
            <person name="Komiyama M."/>
            <person name="Tashiro H."/>
            <person name="Tanigami A."/>
            <person name="Fujiwara T."/>
            <person name="Ono T."/>
            <person name="Yamada K."/>
            <person name="Fujii Y."/>
            <person name="Ozaki K."/>
            <person name="Hirao M."/>
            <person name="Ohmori Y."/>
            <person name="Kawabata A."/>
            <person name="Hikiji T."/>
            <person name="Kobatake N."/>
            <person name="Inagaki H."/>
            <person name="Ikema Y."/>
            <person name="Okamoto S."/>
            <person name="Okitani R."/>
            <person name="Kawakami T."/>
            <person name="Noguchi S."/>
            <person name="Itoh T."/>
            <person name="Shigeta K."/>
            <person name="Senba T."/>
            <person name="Matsumura K."/>
            <person name="Nakajima Y."/>
            <person name="Mizuno T."/>
            <person name="Morinaga M."/>
            <person name="Sasaki M."/>
            <person name="Togashi T."/>
            <person name="Oyama M."/>
            <person name="Hata H."/>
            <person name="Watanabe M."/>
            <person name="Komatsu T."/>
            <person name="Mizushima-Sugano J."/>
            <person name="Satoh T."/>
            <person name="Shirai Y."/>
            <person name="Takahashi Y."/>
            <person name="Nakagawa K."/>
            <person name="Okumura K."/>
            <person name="Nagase T."/>
            <person name="Nomura N."/>
            <person name="Kikuchi H."/>
            <person name="Masuho Y."/>
            <person name="Yamashita R."/>
            <person name="Nakai K."/>
            <person name="Yada T."/>
            <person name="Nakamura Y."/>
            <person name="Ohara O."/>
            <person name="Isogai T."/>
            <person name="Sugano S."/>
        </authorList>
    </citation>
    <scope>NUCLEOTIDE SEQUENCE [LARGE SCALE MRNA]</scope>
    <scope>VARIANTS ILE-284; PHE-299 AND ASP-812</scope>
    <source>
        <tissue>Brain</tissue>
    </source>
</reference>
<reference key="2">
    <citation type="journal article" date="2005" name="Mol. Biol. Evol.">
        <title>Homologs of Drosophila P transposons were mobile in zebrafish but have been domesticated in a common ancestor of chicken and human.</title>
        <authorList>
            <person name="Hammer S.E."/>
            <person name="Strehl S."/>
            <person name="Hagemann S."/>
        </authorList>
    </citation>
    <scope>NUCLEOTIDE SEQUENCE [GENOMIC DNA] OF 351-583</scope>
</reference>
<reference key="3">
    <citation type="journal article" date="2010" name="Nat. Struct. Mol. Biol.">
        <title>THAP proteins target specific DNA sites through bipartite recognition of adjacent major and minor grooves.</title>
        <authorList>
            <person name="Sabogal A."/>
            <person name="Lyubimov A.Y."/>
            <person name="Corn J.E."/>
            <person name="Berger J.M."/>
            <person name="Rio D.C."/>
        </authorList>
    </citation>
    <scope>FUNCTION</scope>
    <scope>DNA-BINDING</scope>
</reference>
<reference key="4">
    <citation type="journal article" date="2013" name="Science">
        <title>The human THAP9 gene encodes an active P-element DNA transposase.</title>
        <authorList>
            <person name="Majumdar S."/>
            <person name="Singh A."/>
            <person name="Rio D.C."/>
        </authorList>
    </citation>
    <scope>FUNCTION</scope>
</reference>
<proteinExistence type="evidence at protein level"/>
<organism>
    <name type="scientific">Homo sapiens</name>
    <name type="common">Human</name>
    <dbReference type="NCBI Taxonomy" id="9606"/>
    <lineage>
        <taxon>Eukaryota</taxon>
        <taxon>Metazoa</taxon>
        <taxon>Chordata</taxon>
        <taxon>Craniata</taxon>
        <taxon>Vertebrata</taxon>
        <taxon>Euteleostomi</taxon>
        <taxon>Mammalia</taxon>
        <taxon>Eutheria</taxon>
        <taxon>Euarchontoglires</taxon>
        <taxon>Primates</taxon>
        <taxon>Haplorrhini</taxon>
        <taxon>Catarrhini</taxon>
        <taxon>Hominidae</taxon>
        <taxon>Homo</taxon>
    </lineage>
</organism>
<dbReference type="EC" id="2.7.7.-"/>
<dbReference type="EMBL" id="AK026973">
    <property type="protein sequence ID" value="BAB15609.1"/>
    <property type="molecule type" value="mRNA"/>
</dbReference>
<dbReference type="EMBL" id="AK091412">
    <property type="protein sequence ID" value="BAG52354.1"/>
    <property type="molecule type" value="mRNA"/>
</dbReference>
<dbReference type="EMBL" id="AJ717666">
    <property type="protein sequence ID" value="CAG30691.1"/>
    <property type="molecule type" value="Genomic_DNA"/>
</dbReference>
<dbReference type="CCDS" id="CCDS3598.1"/>
<dbReference type="RefSeq" id="NP_078948.3">
    <property type="nucleotide sequence ID" value="NM_024672.5"/>
</dbReference>
<dbReference type="SMR" id="Q9H5L6"/>
<dbReference type="BioGRID" id="122840">
    <property type="interactions" value="12"/>
</dbReference>
<dbReference type="ELM" id="Q9H5L6"/>
<dbReference type="FunCoup" id="Q9H5L6">
    <property type="interactions" value="253"/>
</dbReference>
<dbReference type="IntAct" id="Q9H5L6">
    <property type="interactions" value="6"/>
</dbReference>
<dbReference type="STRING" id="9606.ENSP00000305533"/>
<dbReference type="GlyGen" id="Q9H5L6">
    <property type="glycosylation" value="1 site, 1 O-linked glycan (1 site)"/>
</dbReference>
<dbReference type="iPTMnet" id="Q9H5L6"/>
<dbReference type="PhosphoSitePlus" id="Q9H5L6"/>
<dbReference type="BioMuta" id="THAP9"/>
<dbReference type="DMDM" id="166987614"/>
<dbReference type="jPOST" id="Q9H5L6"/>
<dbReference type="MassIVE" id="Q9H5L6"/>
<dbReference type="PaxDb" id="9606-ENSP00000305533"/>
<dbReference type="PeptideAtlas" id="Q9H5L6"/>
<dbReference type="ProteomicsDB" id="80918"/>
<dbReference type="Antibodypedia" id="52352">
    <property type="antibodies" value="44 antibodies from 15 providers"/>
</dbReference>
<dbReference type="DNASU" id="79725"/>
<dbReference type="Ensembl" id="ENST00000302236.10">
    <property type="protein sequence ID" value="ENSP00000305533.5"/>
    <property type="gene ID" value="ENSG00000168152.13"/>
</dbReference>
<dbReference type="GeneID" id="79725"/>
<dbReference type="KEGG" id="hsa:79725"/>
<dbReference type="MANE-Select" id="ENST00000302236.10">
    <property type="protein sequence ID" value="ENSP00000305533.5"/>
    <property type="RefSeq nucleotide sequence ID" value="NM_024672.6"/>
    <property type="RefSeq protein sequence ID" value="NP_078948.3"/>
</dbReference>
<dbReference type="UCSC" id="uc003hnt.3">
    <property type="organism name" value="human"/>
</dbReference>
<dbReference type="AGR" id="HGNC:23192"/>
<dbReference type="CTD" id="79725"/>
<dbReference type="DisGeNET" id="79725"/>
<dbReference type="GeneCards" id="THAP9"/>
<dbReference type="HGNC" id="HGNC:23192">
    <property type="gene designation" value="THAP9"/>
</dbReference>
<dbReference type="HPA" id="ENSG00000168152">
    <property type="expression patterns" value="Low tissue specificity"/>
</dbReference>
<dbReference type="MIM" id="612537">
    <property type="type" value="gene"/>
</dbReference>
<dbReference type="neXtProt" id="NX_Q9H5L6"/>
<dbReference type="OpenTargets" id="ENSG00000168152"/>
<dbReference type="PharmGKB" id="PA134981371"/>
<dbReference type="VEuPathDB" id="HostDB:ENSG00000168152"/>
<dbReference type="eggNOG" id="ENOG502QQSX">
    <property type="taxonomic scope" value="Eukaryota"/>
</dbReference>
<dbReference type="GeneTree" id="ENSGT00940000161474"/>
<dbReference type="HOGENOM" id="CLU_006886_4_0_1"/>
<dbReference type="InParanoid" id="Q9H5L6"/>
<dbReference type="OMA" id="HWQHLVD"/>
<dbReference type="OrthoDB" id="7312725at2759"/>
<dbReference type="PAN-GO" id="Q9H5L6">
    <property type="GO annotations" value="3 GO annotations based on evolutionary models"/>
</dbReference>
<dbReference type="PhylomeDB" id="Q9H5L6"/>
<dbReference type="TreeFam" id="TF328542"/>
<dbReference type="PathwayCommons" id="Q9H5L6"/>
<dbReference type="SignaLink" id="Q9H5L6"/>
<dbReference type="BioGRID-ORCS" id="79725">
    <property type="hits" value="6 hits in 1173 CRISPR screens"/>
</dbReference>
<dbReference type="ChiTaRS" id="THAP9">
    <property type="organism name" value="human"/>
</dbReference>
<dbReference type="GenomeRNAi" id="79725"/>
<dbReference type="Pharos" id="Q9H5L6">
    <property type="development level" value="Tbio"/>
</dbReference>
<dbReference type="PRO" id="PR:Q9H5L6"/>
<dbReference type="Proteomes" id="UP000005640">
    <property type="component" value="Chromosome 4"/>
</dbReference>
<dbReference type="RNAct" id="Q9H5L6">
    <property type="molecule type" value="protein"/>
</dbReference>
<dbReference type="Bgee" id="ENSG00000168152">
    <property type="expression patterns" value="Expressed in sperm and 130 other cell types or tissues"/>
</dbReference>
<dbReference type="ExpressionAtlas" id="Q9H5L6">
    <property type="expression patterns" value="baseline and differential"/>
</dbReference>
<dbReference type="GO" id="GO:0003677">
    <property type="term" value="F:DNA binding"/>
    <property type="evidence" value="ECO:0000318"/>
    <property type="project" value="GO_Central"/>
</dbReference>
<dbReference type="GO" id="GO:0043565">
    <property type="term" value="F:sequence-specific DNA binding"/>
    <property type="evidence" value="ECO:0000314"/>
    <property type="project" value="UniProtKB"/>
</dbReference>
<dbReference type="GO" id="GO:0016740">
    <property type="term" value="F:transferase activity"/>
    <property type="evidence" value="ECO:0007669"/>
    <property type="project" value="UniProtKB-KW"/>
</dbReference>
<dbReference type="GO" id="GO:0004803">
    <property type="term" value="F:transposase activity"/>
    <property type="evidence" value="ECO:0000314"/>
    <property type="project" value="UniProtKB"/>
</dbReference>
<dbReference type="GO" id="GO:0008270">
    <property type="term" value="F:zinc ion binding"/>
    <property type="evidence" value="ECO:0007669"/>
    <property type="project" value="UniProtKB-KW"/>
</dbReference>
<dbReference type="GO" id="GO:0015074">
    <property type="term" value="P:DNA integration"/>
    <property type="evidence" value="ECO:0000314"/>
    <property type="project" value="UniProtKB"/>
</dbReference>
<dbReference type="GO" id="GO:0006310">
    <property type="term" value="P:DNA recombination"/>
    <property type="evidence" value="ECO:0000314"/>
    <property type="project" value="UniProtKB"/>
</dbReference>
<dbReference type="GO" id="GO:0006313">
    <property type="term" value="P:DNA transposition"/>
    <property type="evidence" value="ECO:0000314"/>
    <property type="project" value="UniProtKB"/>
</dbReference>
<dbReference type="Gene3D" id="6.20.210.20">
    <property type="entry name" value="THAP domain"/>
    <property type="match status" value="1"/>
</dbReference>
<dbReference type="InterPro" id="IPR021896">
    <property type="entry name" value="THAP9-like_HTH"/>
</dbReference>
<dbReference type="InterPro" id="IPR055035">
    <property type="entry name" value="THAP9_C"/>
</dbReference>
<dbReference type="InterPro" id="IPR006612">
    <property type="entry name" value="THAP_Znf"/>
</dbReference>
<dbReference type="InterPro" id="IPR038441">
    <property type="entry name" value="THAP_Znf_sf"/>
</dbReference>
<dbReference type="InterPro" id="IPR048366">
    <property type="entry name" value="TNP-like_GBD"/>
</dbReference>
<dbReference type="InterPro" id="IPR048367">
    <property type="entry name" value="TNP-like_RNaseH_C"/>
</dbReference>
<dbReference type="InterPro" id="IPR048365">
    <property type="entry name" value="TNP-like_RNaseH_N"/>
</dbReference>
<dbReference type="PANTHER" id="PTHR47577">
    <property type="entry name" value="THAP DOMAIN-CONTAINING PROTEIN 6"/>
    <property type="match status" value="1"/>
</dbReference>
<dbReference type="PANTHER" id="PTHR47577:SF1">
    <property type="entry name" value="THAP DOMAIN-CONTAINING PROTEIN 6"/>
    <property type="match status" value="1"/>
</dbReference>
<dbReference type="Pfam" id="PF05485">
    <property type="entry name" value="THAP"/>
    <property type="match status" value="1"/>
</dbReference>
<dbReference type="Pfam" id="PF22824">
    <property type="entry name" value="THAP9_C"/>
    <property type="match status" value="1"/>
</dbReference>
<dbReference type="Pfam" id="PF21788">
    <property type="entry name" value="TNP-like_GBD"/>
    <property type="match status" value="1"/>
</dbReference>
<dbReference type="Pfam" id="PF21789">
    <property type="entry name" value="TNP-like_RNaseH_C"/>
    <property type="match status" value="1"/>
</dbReference>
<dbReference type="Pfam" id="PF21787">
    <property type="entry name" value="TNP-like_RNaseH_N"/>
    <property type="match status" value="1"/>
</dbReference>
<dbReference type="Pfam" id="PF12017">
    <property type="entry name" value="Tnp_P_element"/>
    <property type="match status" value="1"/>
</dbReference>
<dbReference type="SMART" id="SM00692">
    <property type="entry name" value="DM3"/>
    <property type="match status" value="1"/>
</dbReference>
<dbReference type="SMART" id="SM00980">
    <property type="entry name" value="THAP"/>
    <property type="match status" value="1"/>
</dbReference>
<dbReference type="SUPFAM" id="SSF57716">
    <property type="entry name" value="Glucocorticoid receptor-like (DNA-binding domain)"/>
    <property type="match status" value="1"/>
</dbReference>
<dbReference type="PROSITE" id="PS50950">
    <property type="entry name" value="ZF_THAP"/>
    <property type="match status" value="1"/>
</dbReference>